<keyword id="KW-0963">Cytoplasm</keyword>
<keyword id="KW-0251">Elongation factor</keyword>
<keyword id="KW-0648">Protein biosynthesis</keyword>
<keyword id="KW-1185">Reference proteome</keyword>
<dbReference type="EMBL" id="CP000509">
    <property type="protein sequence ID" value="ABL81922.1"/>
    <property type="molecule type" value="Genomic_DNA"/>
</dbReference>
<dbReference type="RefSeq" id="WP_011755863.1">
    <property type="nucleotide sequence ID" value="NC_008699.1"/>
</dbReference>
<dbReference type="SMR" id="A1SJD7"/>
<dbReference type="STRING" id="196162.Noca_2417"/>
<dbReference type="KEGG" id="nca:Noca_2417"/>
<dbReference type="eggNOG" id="COG0231">
    <property type="taxonomic scope" value="Bacteria"/>
</dbReference>
<dbReference type="HOGENOM" id="CLU_074944_0_1_11"/>
<dbReference type="OrthoDB" id="9801844at2"/>
<dbReference type="UniPathway" id="UPA00345"/>
<dbReference type="Proteomes" id="UP000000640">
    <property type="component" value="Chromosome"/>
</dbReference>
<dbReference type="GO" id="GO:0005737">
    <property type="term" value="C:cytoplasm"/>
    <property type="evidence" value="ECO:0007669"/>
    <property type="project" value="UniProtKB-SubCell"/>
</dbReference>
<dbReference type="GO" id="GO:0003746">
    <property type="term" value="F:translation elongation factor activity"/>
    <property type="evidence" value="ECO:0007669"/>
    <property type="project" value="UniProtKB-UniRule"/>
</dbReference>
<dbReference type="GO" id="GO:0043043">
    <property type="term" value="P:peptide biosynthetic process"/>
    <property type="evidence" value="ECO:0007669"/>
    <property type="project" value="InterPro"/>
</dbReference>
<dbReference type="CDD" id="cd04470">
    <property type="entry name" value="S1_EF-P_repeat_1"/>
    <property type="match status" value="1"/>
</dbReference>
<dbReference type="CDD" id="cd05794">
    <property type="entry name" value="S1_EF-P_repeat_2"/>
    <property type="match status" value="1"/>
</dbReference>
<dbReference type="FunFam" id="2.30.30.30:FF:000003">
    <property type="entry name" value="Elongation factor P"/>
    <property type="match status" value="1"/>
</dbReference>
<dbReference type="FunFam" id="2.40.50.140:FF:000004">
    <property type="entry name" value="Elongation factor P"/>
    <property type="match status" value="1"/>
</dbReference>
<dbReference type="FunFam" id="2.40.50.140:FF:000009">
    <property type="entry name" value="Elongation factor P"/>
    <property type="match status" value="1"/>
</dbReference>
<dbReference type="Gene3D" id="2.30.30.30">
    <property type="match status" value="1"/>
</dbReference>
<dbReference type="Gene3D" id="2.40.50.140">
    <property type="entry name" value="Nucleic acid-binding proteins"/>
    <property type="match status" value="2"/>
</dbReference>
<dbReference type="HAMAP" id="MF_00141">
    <property type="entry name" value="EF_P"/>
    <property type="match status" value="1"/>
</dbReference>
<dbReference type="InterPro" id="IPR015365">
    <property type="entry name" value="Elong-fact-P_C"/>
</dbReference>
<dbReference type="InterPro" id="IPR012340">
    <property type="entry name" value="NA-bd_OB-fold"/>
</dbReference>
<dbReference type="InterPro" id="IPR014722">
    <property type="entry name" value="Rib_uL2_dom2"/>
</dbReference>
<dbReference type="InterPro" id="IPR020599">
    <property type="entry name" value="Transl_elong_fac_P/YeiP"/>
</dbReference>
<dbReference type="InterPro" id="IPR013185">
    <property type="entry name" value="Transl_elong_KOW-like"/>
</dbReference>
<dbReference type="InterPro" id="IPR001059">
    <property type="entry name" value="Transl_elong_P/YeiP_cen"/>
</dbReference>
<dbReference type="InterPro" id="IPR013852">
    <property type="entry name" value="Transl_elong_P/YeiP_CS"/>
</dbReference>
<dbReference type="InterPro" id="IPR011768">
    <property type="entry name" value="Transl_elongation_fac_P"/>
</dbReference>
<dbReference type="InterPro" id="IPR008991">
    <property type="entry name" value="Translation_prot_SH3-like_sf"/>
</dbReference>
<dbReference type="NCBIfam" id="TIGR00038">
    <property type="entry name" value="efp"/>
    <property type="match status" value="1"/>
</dbReference>
<dbReference type="NCBIfam" id="NF001810">
    <property type="entry name" value="PRK00529.1"/>
    <property type="match status" value="1"/>
</dbReference>
<dbReference type="PANTHER" id="PTHR30053">
    <property type="entry name" value="ELONGATION FACTOR P"/>
    <property type="match status" value="1"/>
</dbReference>
<dbReference type="PANTHER" id="PTHR30053:SF12">
    <property type="entry name" value="ELONGATION FACTOR P (EF-P) FAMILY PROTEIN"/>
    <property type="match status" value="1"/>
</dbReference>
<dbReference type="Pfam" id="PF01132">
    <property type="entry name" value="EFP"/>
    <property type="match status" value="1"/>
</dbReference>
<dbReference type="Pfam" id="PF08207">
    <property type="entry name" value="EFP_N"/>
    <property type="match status" value="1"/>
</dbReference>
<dbReference type="Pfam" id="PF09285">
    <property type="entry name" value="Elong-fact-P_C"/>
    <property type="match status" value="1"/>
</dbReference>
<dbReference type="PIRSF" id="PIRSF005901">
    <property type="entry name" value="EF-P"/>
    <property type="match status" value="1"/>
</dbReference>
<dbReference type="SMART" id="SM01185">
    <property type="entry name" value="EFP"/>
    <property type="match status" value="1"/>
</dbReference>
<dbReference type="SMART" id="SM00841">
    <property type="entry name" value="Elong-fact-P_C"/>
    <property type="match status" value="1"/>
</dbReference>
<dbReference type="SUPFAM" id="SSF50249">
    <property type="entry name" value="Nucleic acid-binding proteins"/>
    <property type="match status" value="2"/>
</dbReference>
<dbReference type="SUPFAM" id="SSF50104">
    <property type="entry name" value="Translation proteins SH3-like domain"/>
    <property type="match status" value="1"/>
</dbReference>
<dbReference type="PROSITE" id="PS01275">
    <property type="entry name" value="EFP"/>
    <property type="match status" value="1"/>
</dbReference>
<reference key="1">
    <citation type="submission" date="2006-12" db="EMBL/GenBank/DDBJ databases">
        <title>Complete sequence of chromosome 1 of Nocardioides sp. JS614.</title>
        <authorList>
            <person name="Copeland A."/>
            <person name="Lucas S."/>
            <person name="Lapidus A."/>
            <person name="Barry K."/>
            <person name="Detter J.C."/>
            <person name="Glavina del Rio T."/>
            <person name="Hammon N."/>
            <person name="Israni S."/>
            <person name="Dalin E."/>
            <person name="Tice H."/>
            <person name="Pitluck S."/>
            <person name="Thompson L.S."/>
            <person name="Brettin T."/>
            <person name="Bruce D."/>
            <person name="Han C."/>
            <person name="Tapia R."/>
            <person name="Schmutz J."/>
            <person name="Larimer F."/>
            <person name="Land M."/>
            <person name="Hauser L."/>
            <person name="Kyrpides N."/>
            <person name="Kim E."/>
            <person name="Mattes T."/>
            <person name="Gossett J."/>
            <person name="Richardson P."/>
        </authorList>
    </citation>
    <scope>NUCLEOTIDE SEQUENCE [LARGE SCALE GENOMIC DNA]</scope>
    <source>
        <strain>ATCC BAA-499 / JS614</strain>
    </source>
</reference>
<comment type="function">
    <text evidence="1">Involved in peptide bond synthesis. Stimulates efficient translation and peptide-bond synthesis on native or reconstituted 70S ribosomes in vitro. Probably functions indirectly by altering the affinity of the ribosome for aminoacyl-tRNA, thus increasing their reactivity as acceptors for peptidyl transferase.</text>
</comment>
<comment type="pathway">
    <text evidence="1">Protein biosynthesis; polypeptide chain elongation.</text>
</comment>
<comment type="subcellular location">
    <subcellularLocation>
        <location evidence="1">Cytoplasm</location>
    </subcellularLocation>
</comment>
<comment type="similarity">
    <text evidence="1">Belongs to the elongation factor P family.</text>
</comment>
<feature type="chain" id="PRO_1000010796" description="Elongation factor P">
    <location>
        <begin position="1"/>
        <end position="187"/>
    </location>
</feature>
<sequence length="187" mass="20599">MATTNDLKNGMVLNIDGQLWAVVEFQHVKPGKGPAFVRTKLKNVESNKTVDKTFNAGTKVETATVDRRTMQYLYNDGSSYVFMDVQSYDQLEIAPEIVGNAKNFLLENQEAIVATNEGRVLFIELPASVELEITFTEPGLAGDSATGRTKPATLETGHEIQVPLFINQGEKVKVDTRDSSYLGRVKG</sequence>
<accession>A1SJD7</accession>
<proteinExistence type="inferred from homology"/>
<organism>
    <name type="scientific">Nocardioides sp. (strain ATCC BAA-499 / JS614)</name>
    <dbReference type="NCBI Taxonomy" id="196162"/>
    <lineage>
        <taxon>Bacteria</taxon>
        <taxon>Bacillati</taxon>
        <taxon>Actinomycetota</taxon>
        <taxon>Actinomycetes</taxon>
        <taxon>Propionibacteriales</taxon>
        <taxon>Nocardioidaceae</taxon>
        <taxon>Nocardioides</taxon>
    </lineage>
</organism>
<protein>
    <recommendedName>
        <fullName evidence="1">Elongation factor P</fullName>
        <shortName evidence="1">EF-P</shortName>
    </recommendedName>
</protein>
<evidence type="ECO:0000255" key="1">
    <source>
        <dbReference type="HAMAP-Rule" id="MF_00141"/>
    </source>
</evidence>
<name>EFP_NOCSJ</name>
<gene>
    <name evidence="1" type="primary">efp</name>
    <name type="ordered locus">Noca_2417</name>
</gene>